<proteinExistence type="evidence at protein level"/>
<reference key="1">
    <citation type="journal article" date="2014" name="Nat. Chem. Biol.">
        <title>Biosynthesis of polybrominated aromatic organic compounds by marine bacteria.</title>
        <authorList>
            <person name="Agarwal V."/>
            <person name="El Gamal A.A."/>
            <person name="Yamanaka K."/>
            <person name="Poth D."/>
            <person name="Kersten R.D."/>
            <person name="Schorn M."/>
            <person name="Allen E.E."/>
            <person name="Moore B.S."/>
        </authorList>
    </citation>
    <scope>NUCLEOTIDE SEQUENCE [LARGE SCALE GENOMIC DNA]</scope>
    <scope>FUNCTION</scope>
    <scope>CATALYTIC ACTIVITY</scope>
    <scope>DISRUPTION PHENOTYPE</scope>
    <source>
        <strain>2ta16</strain>
    </source>
</reference>
<protein>
    <recommendedName>
        <fullName evidence="4">1H-pyrrole-2-carbonyl-[peptidyl-carrier protein] brominase</fullName>
        <ecNumber evidence="2">1.14.19.57</ecNumber>
    </recommendedName>
    <alternativeName>
        <fullName evidence="3">Brominase Bmp2</fullName>
    </alternativeName>
</protein>
<feature type="chain" id="PRO_0000459987" description="1H-pyrrole-2-carbonyl-[peptidyl-carrier protein] brominase">
    <location>
        <begin position="1"/>
        <end position="406"/>
    </location>
</feature>
<feature type="binding site" evidence="1">
    <location>
        <position position="17"/>
    </location>
    <ligand>
        <name>FAD</name>
        <dbReference type="ChEBI" id="CHEBI:57692"/>
    </ligand>
</feature>
<feature type="binding site" evidence="1">
    <location>
        <position position="36"/>
    </location>
    <ligand>
        <name>FAD</name>
        <dbReference type="ChEBI" id="CHEBI:57692"/>
    </ligand>
</feature>
<feature type="binding site" evidence="1">
    <location>
        <position position="42"/>
    </location>
    <ligand>
        <name>FAD</name>
        <dbReference type="ChEBI" id="CHEBI:57692"/>
    </ligand>
</feature>
<feature type="binding site" evidence="1">
    <location>
        <position position="44"/>
    </location>
    <ligand>
        <name>FAD</name>
        <dbReference type="ChEBI" id="CHEBI:57692"/>
    </ligand>
</feature>
<feature type="binding site" evidence="1">
    <location>
        <position position="45"/>
    </location>
    <ligand>
        <name>FAD</name>
        <dbReference type="ChEBI" id="CHEBI:57692"/>
    </ligand>
</feature>
<feature type="binding site" evidence="1">
    <location>
        <position position="48"/>
    </location>
    <ligand>
        <name>FAD</name>
        <dbReference type="ChEBI" id="CHEBI:57692"/>
    </ligand>
</feature>
<feature type="binding site" evidence="1">
    <location>
        <position position="101"/>
    </location>
    <ligand>
        <name>FAD</name>
        <dbReference type="ChEBI" id="CHEBI:57692"/>
    </ligand>
</feature>
<feature type="binding site" evidence="1">
    <location>
        <position position="124"/>
    </location>
    <ligand>
        <name>FAD</name>
        <dbReference type="ChEBI" id="CHEBI:57692"/>
    </ligand>
</feature>
<feature type="binding site" evidence="1">
    <location>
        <position position="291"/>
    </location>
    <ligand>
        <name>FAD</name>
        <dbReference type="ChEBI" id="CHEBI:57692"/>
    </ligand>
</feature>
<feature type="binding site" evidence="1">
    <location>
        <position position="304"/>
    </location>
    <ligand>
        <name>FAD</name>
        <dbReference type="ChEBI" id="CHEBI:57692"/>
    </ligand>
</feature>
<comment type="function">
    <text evidence="2">Brominase involved in the biosynthesis of polybrominated aromatic organic compounds (PubMed:24974229). Catalyzes three successive rounds of bromination of pyrrolyl-S-Bmp1 to produce mono-, di- and tribromopyrrolyl-S-Bmp1 (PubMed:24974229).</text>
</comment>
<comment type="catalytic activity">
    <reaction evidence="2">
        <text>(1H-pyrrole-2-carbonyl)-[peptidyl-carrier protein] + 3 bromide + 3 FADH2 + 3 O2 = (3,4,5-tribromo-1H-pyrrole-2-carbonyl)-[peptidyl-carrier protein] + 3 FAD + 6 H2O</text>
        <dbReference type="Rhea" id="RHEA:56468"/>
        <dbReference type="Rhea" id="RHEA-COMP:14110"/>
        <dbReference type="Rhea" id="RHEA-COMP:14550"/>
        <dbReference type="ChEBI" id="CHEBI:15377"/>
        <dbReference type="ChEBI" id="CHEBI:15379"/>
        <dbReference type="ChEBI" id="CHEBI:15858"/>
        <dbReference type="ChEBI" id="CHEBI:57692"/>
        <dbReference type="ChEBI" id="CHEBI:58307"/>
        <dbReference type="ChEBI" id="CHEBI:138623"/>
        <dbReference type="ChEBI" id="CHEBI:140456"/>
        <dbReference type="EC" id="1.14.19.57"/>
    </reaction>
    <physiologicalReaction direction="left-to-right" evidence="2">
        <dbReference type="Rhea" id="RHEA:56469"/>
    </physiologicalReaction>
</comment>
<comment type="catalytic activity">
    <reaction evidence="2">
        <text>(1H-pyrrole-2-carbonyl)-[peptidyl-carrier protein] + bromide + FADH2 + O2 = (5-bromo-1H-pyrrole-2-carbonyl)-[peptidyl-carrier protein] + FAD + 2 H2O</text>
        <dbReference type="Rhea" id="RHEA:56472"/>
        <dbReference type="Rhea" id="RHEA-COMP:14110"/>
        <dbReference type="Rhea" id="RHEA-COMP:14548"/>
        <dbReference type="ChEBI" id="CHEBI:15377"/>
        <dbReference type="ChEBI" id="CHEBI:15379"/>
        <dbReference type="ChEBI" id="CHEBI:15858"/>
        <dbReference type="ChEBI" id="CHEBI:57692"/>
        <dbReference type="ChEBI" id="CHEBI:58307"/>
        <dbReference type="ChEBI" id="CHEBI:138623"/>
        <dbReference type="ChEBI" id="CHEBI:140454"/>
    </reaction>
    <physiologicalReaction direction="left-to-right" evidence="2">
        <dbReference type="Rhea" id="RHEA:56473"/>
    </physiologicalReaction>
</comment>
<comment type="catalytic activity">
    <reaction evidence="2">
        <text>(5-bromo-1H-pyrrole-2-carbonyl)-[peptidyl-carrier protein] + bromide + FADH2 + O2 = (4,5-dibromo-1H-pyrrole-2-carbonyl)-[peptidyl-carrier protein] + FAD + 2 H2O</text>
        <dbReference type="Rhea" id="RHEA:56476"/>
        <dbReference type="Rhea" id="RHEA-COMP:14548"/>
        <dbReference type="Rhea" id="RHEA-COMP:14549"/>
        <dbReference type="ChEBI" id="CHEBI:15377"/>
        <dbReference type="ChEBI" id="CHEBI:15379"/>
        <dbReference type="ChEBI" id="CHEBI:15858"/>
        <dbReference type="ChEBI" id="CHEBI:57692"/>
        <dbReference type="ChEBI" id="CHEBI:58307"/>
        <dbReference type="ChEBI" id="CHEBI:140454"/>
        <dbReference type="ChEBI" id="CHEBI:140455"/>
    </reaction>
    <physiologicalReaction direction="left-to-right" evidence="2">
        <dbReference type="Rhea" id="RHEA:56477"/>
    </physiologicalReaction>
</comment>
<comment type="catalytic activity">
    <reaction evidence="2">
        <text>(4,5-dibromo-1H-pyrrole-2-carbonyl)-[peptidyl-carrier protein] + bromide + FADH2 + O2 = (3,4,5-tribromo-1H-pyrrole-2-carbonyl)-[peptidyl-carrier protein] + FAD + 2 H2O</text>
        <dbReference type="Rhea" id="RHEA:56480"/>
        <dbReference type="Rhea" id="RHEA-COMP:14549"/>
        <dbReference type="Rhea" id="RHEA-COMP:14550"/>
        <dbReference type="ChEBI" id="CHEBI:15377"/>
        <dbReference type="ChEBI" id="CHEBI:15379"/>
        <dbReference type="ChEBI" id="CHEBI:15858"/>
        <dbReference type="ChEBI" id="CHEBI:57692"/>
        <dbReference type="ChEBI" id="CHEBI:58307"/>
        <dbReference type="ChEBI" id="CHEBI:140455"/>
        <dbReference type="ChEBI" id="CHEBI:140456"/>
    </reaction>
    <physiologicalReaction direction="left-to-right" evidence="2">
        <dbReference type="Rhea" id="RHEA:56481"/>
    </physiologicalReaction>
</comment>
<comment type="disruption phenotype">
    <text evidence="2">Deletion of the gene abolishes the production of several bromopyrroles.</text>
</comment>
<comment type="similarity">
    <text evidence="4">Belongs to the flavin-dependent halogenase family.</text>
</comment>
<sequence length="406" mass="46021">MSEFKSYDVVIIGSGPAGSLCGIECRKKGLSVLCIEKDEFPRFHIGESLTGNAGQIIRDLGLAEEMDAAGFPDKPGVNVIGSLSKNEFFIPILAPTWQVKRSDFDNMLKRKALEHGVEYQQGLVKDVIKHDGKVVGAIYKADDMEHQVRSKVLVDASGQNTFLSRKGIAGKREIEFFSQQIASFAHYKGVERDLPPFSTNTTILYSKQYHWSWIIPISPDTDSLGIVIPKDLYYKECKNPDDAIEWGMENISPEIRRRFQNAERIGDSQSMADFSYRIEPFVGDGWLCIGDAHRFLDPIFSYGVSFAMKEGIRAADAIKQAIDGNDWKTPFYAYRDWSNGGQQIAADLIRYFWIYPIFFGYQMQNPDLRDEVIRLLGGCCFDCEGWKAPTIFRNAIEEYDRKQMVG</sequence>
<gene>
    <name evidence="3" type="primary">bmp2</name>
    <name evidence="5" type="ORF">PL2TA16_01236</name>
</gene>
<organism>
    <name type="scientific">Pseudoalteromonas luteoviolacea (strain 2ta16)</name>
    <dbReference type="NCBI Taxonomy" id="1353533"/>
    <lineage>
        <taxon>Bacteria</taxon>
        <taxon>Pseudomonadati</taxon>
        <taxon>Pseudomonadota</taxon>
        <taxon>Gammaproteobacteria</taxon>
        <taxon>Alteromonadales</taxon>
        <taxon>Pseudoalteromonadaceae</taxon>
        <taxon>Pseudoalteromonas</taxon>
    </lineage>
</organism>
<evidence type="ECO:0000250" key="1">
    <source>
        <dbReference type="UniProtKB" id="Q4KCZ0"/>
    </source>
</evidence>
<evidence type="ECO:0000269" key="2">
    <source>
    </source>
</evidence>
<evidence type="ECO:0000303" key="3">
    <source>
    </source>
</evidence>
<evidence type="ECO:0000305" key="4"/>
<evidence type="ECO:0000312" key="5">
    <source>
        <dbReference type="EMBL" id="ESP90845.1"/>
    </source>
</evidence>
<keyword id="KW-0274">FAD</keyword>
<keyword id="KW-0285">Flavoprotein</keyword>
<keyword id="KW-0560">Oxidoreductase</keyword>
<accession>V4HJ70</accession>
<name>BMP2_PSEL2</name>
<dbReference type="EC" id="1.14.19.57" evidence="2"/>
<dbReference type="EMBL" id="AUSV01000133">
    <property type="protein sequence ID" value="ESP90845.1"/>
    <property type="molecule type" value="Genomic_DNA"/>
</dbReference>
<dbReference type="RefSeq" id="WP_023401491.1">
    <property type="nucleotide sequence ID" value="NZ_AUSV01000133.1"/>
</dbReference>
<dbReference type="SMR" id="V4HJ70"/>
<dbReference type="PATRIC" id="fig|1353533.3.peg.4655"/>
<dbReference type="BioCyc" id="MetaCyc:MONOMER-20318"/>
<dbReference type="Proteomes" id="UP000017820">
    <property type="component" value="Unassembled WGS sequence"/>
</dbReference>
<dbReference type="GO" id="GO:0071949">
    <property type="term" value="F:FAD binding"/>
    <property type="evidence" value="ECO:0007669"/>
    <property type="project" value="InterPro"/>
</dbReference>
<dbReference type="GO" id="GO:0016491">
    <property type="term" value="F:oxidoreductase activity"/>
    <property type="evidence" value="ECO:0007669"/>
    <property type="project" value="UniProtKB-KW"/>
</dbReference>
<dbReference type="Gene3D" id="3.50.50.60">
    <property type="entry name" value="FAD/NAD(P)-binding domain"/>
    <property type="match status" value="1"/>
</dbReference>
<dbReference type="InterPro" id="IPR002938">
    <property type="entry name" value="FAD-bd"/>
</dbReference>
<dbReference type="InterPro" id="IPR036188">
    <property type="entry name" value="FAD/NAD-bd_sf"/>
</dbReference>
<dbReference type="InterPro" id="IPR050816">
    <property type="entry name" value="Flavin-dep_Halogenase_NPB"/>
</dbReference>
<dbReference type="PANTHER" id="PTHR43747">
    <property type="entry name" value="FAD-BINDING PROTEIN"/>
    <property type="match status" value="1"/>
</dbReference>
<dbReference type="PANTHER" id="PTHR43747:SF1">
    <property type="entry name" value="SLR1998 PROTEIN"/>
    <property type="match status" value="1"/>
</dbReference>
<dbReference type="Pfam" id="PF01494">
    <property type="entry name" value="FAD_binding_3"/>
    <property type="match status" value="1"/>
</dbReference>
<dbReference type="PRINTS" id="PR00469">
    <property type="entry name" value="PNDRDTASEII"/>
</dbReference>
<dbReference type="SUPFAM" id="SSF51905">
    <property type="entry name" value="FAD/NAD(P)-binding domain"/>
    <property type="match status" value="1"/>
</dbReference>